<reference key="1">
    <citation type="journal article" date="2008" name="J. Bacteriol.">
        <title>Complete genome sequence of Neisseria gonorrhoeae NCCP11945.</title>
        <authorList>
            <person name="Chung G.T."/>
            <person name="Yoo J.S."/>
            <person name="Oh H.B."/>
            <person name="Lee Y.S."/>
            <person name="Cha S.H."/>
            <person name="Kim S.J."/>
            <person name="Yoo C.K."/>
        </authorList>
    </citation>
    <scope>NUCLEOTIDE SEQUENCE [LARGE SCALE GENOMIC DNA]</scope>
    <source>
        <strain>NCCP11945</strain>
    </source>
</reference>
<comment type="function">
    <text evidence="1">May play a role in DNA repair. It seems to be involved in an RecBC-independent recombinational process of DNA repair. It may act with RecF and RecO.</text>
</comment>
<comment type="similarity">
    <text evidence="1">Belongs to the RecR family.</text>
</comment>
<protein>
    <recommendedName>
        <fullName evidence="1">Recombination protein RecR</fullName>
    </recommendedName>
</protein>
<feature type="chain" id="PRO_1000089749" description="Recombination protein RecR">
    <location>
        <begin position="1"/>
        <end position="206"/>
    </location>
</feature>
<feature type="domain" description="Toprim" evidence="1">
    <location>
        <begin position="83"/>
        <end position="178"/>
    </location>
</feature>
<feature type="zinc finger region" description="C4-type" evidence="1">
    <location>
        <begin position="60"/>
        <end position="75"/>
    </location>
</feature>
<name>RECR_NEIG2</name>
<organism>
    <name type="scientific">Neisseria gonorrhoeae (strain NCCP11945)</name>
    <dbReference type="NCBI Taxonomy" id="521006"/>
    <lineage>
        <taxon>Bacteria</taxon>
        <taxon>Pseudomonadati</taxon>
        <taxon>Pseudomonadota</taxon>
        <taxon>Betaproteobacteria</taxon>
        <taxon>Neisseriales</taxon>
        <taxon>Neisseriaceae</taxon>
        <taxon>Neisseria</taxon>
    </lineage>
</organism>
<accession>B4RLV1</accession>
<sequence length="206" mass="22618">MMNSKKQDAFQRLIGALKVLPNVGPKSAQRMAYHLLQQKRKEAEELVDALQTALRQVRHCARCNTFCEGGLCDICADETRDGRRLMVVHMPADVSNIEAANCHDGLYFVLMGQINTALGMDVSAIALDRLAQRLDGGEIEEIIIATAFTAEGNATAYVLSEFFKNLPYKVSRLSQGIPLGGELEYVDAGTLAQAVYERRLIKEGGA</sequence>
<keyword id="KW-0227">DNA damage</keyword>
<keyword id="KW-0233">DNA recombination</keyword>
<keyword id="KW-0234">DNA repair</keyword>
<keyword id="KW-0479">Metal-binding</keyword>
<keyword id="KW-0862">Zinc</keyword>
<keyword id="KW-0863">Zinc-finger</keyword>
<gene>
    <name evidence="1" type="primary">recR</name>
    <name type="ordered locus">NGK_1111</name>
</gene>
<proteinExistence type="inferred from homology"/>
<dbReference type="EMBL" id="CP001050">
    <property type="protein sequence ID" value="ACF29788.1"/>
    <property type="molecule type" value="Genomic_DNA"/>
</dbReference>
<dbReference type="SMR" id="B4RLV1"/>
<dbReference type="KEGG" id="ngk:NGK_1111"/>
<dbReference type="HOGENOM" id="CLU_060739_1_2_4"/>
<dbReference type="Proteomes" id="UP000002564">
    <property type="component" value="Chromosome"/>
</dbReference>
<dbReference type="GO" id="GO:0003677">
    <property type="term" value="F:DNA binding"/>
    <property type="evidence" value="ECO:0007669"/>
    <property type="project" value="UniProtKB-UniRule"/>
</dbReference>
<dbReference type="GO" id="GO:0008270">
    <property type="term" value="F:zinc ion binding"/>
    <property type="evidence" value="ECO:0007669"/>
    <property type="project" value="UniProtKB-KW"/>
</dbReference>
<dbReference type="GO" id="GO:0006310">
    <property type="term" value="P:DNA recombination"/>
    <property type="evidence" value="ECO:0007669"/>
    <property type="project" value="UniProtKB-UniRule"/>
</dbReference>
<dbReference type="GO" id="GO:0006281">
    <property type="term" value="P:DNA repair"/>
    <property type="evidence" value="ECO:0007669"/>
    <property type="project" value="UniProtKB-UniRule"/>
</dbReference>
<dbReference type="CDD" id="cd01025">
    <property type="entry name" value="TOPRIM_recR"/>
    <property type="match status" value="1"/>
</dbReference>
<dbReference type="Gene3D" id="3.40.1360.10">
    <property type="match status" value="1"/>
</dbReference>
<dbReference type="Gene3D" id="1.10.8.420">
    <property type="entry name" value="RecR Domain 1"/>
    <property type="match status" value="1"/>
</dbReference>
<dbReference type="HAMAP" id="MF_00017">
    <property type="entry name" value="RecR"/>
    <property type="match status" value="1"/>
</dbReference>
<dbReference type="InterPro" id="IPR000093">
    <property type="entry name" value="DNA_Rcmb_RecR"/>
</dbReference>
<dbReference type="InterPro" id="IPR023627">
    <property type="entry name" value="Rcmb_RecR"/>
</dbReference>
<dbReference type="InterPro" id="IPR015967">
    <property type="entry name" value="Rcmb_RecR_Znf"/>
</dbReference>
<dbReference type="InterPro" id="IPR006171">
    <property type="entry name" value="TOPRIM_dom"/>
</dbReference>
<dbReference type="InterPro" id="IPR034137">
    <property type="entry name" value="TOPRIM_RecR"/>
</dbReference>
<dbReference type="NCBIfam" id="TIGR00615">
    <property type="entry name" value="recR"/>
    <property type="match status" value="1"/>
</dbReference>
<dbReference type="PANTHER" id="PTHR30446">
    <property type="entry name" value="RECOMBINATION PROTEIN RECR"/>
    <property type="match status" value="1"/>
</dbReference>
<dbReference type="PANTHER" id="PTHR30446:SF0">
    <property type="entry name" value="RECOMBINATION PROTEIN RECR"/>
    <property type="match status" value="1"/>
</dbReference>
<dbReference type="Pfam" id="PF21175">
    <property type="entry name" value="RecR_C"/>
    <property type="match status" value="1"/>
</dbReference>
<dbReference type="Pfam" id="PF21176">
    <property type="entry name" value="RecR_HhH"/>
    <property type="match status" value="1"/>
</dbReference>
<dbReference type="Pfam" id="PF02132">
    <property type="entry name" value="RecR_ZnF"/>
    <property type="match status" value="1"/>
</dbReference>
<dbReference type="Pfam" id="PF13662">
    <property type="entry name" value="Toprim_4"/>
    <property type="match status" value="1"/>
</dbReference>
<dbReference type="SUPFAM" id="SSF111304">
    <property type="entry name" value="Recombination protein RecR"/>
    <property type="match status" value="1"/>
</dbReference>
<dbReference type="PROSITE" id="PS01300">
    <property type="entry name" value="RECR"/>
    <property type="match status" value="1"/>
</dbReference>
<dbReference type="PROSITE" id="PS50880">
    <property type="entry name" value="TOPRIM"/>
    <property type="match status" value="1"/>
</dbReference>
<evidence type="ECO:0000255" key="1">
    <source>
        <dbReference type="HAMAP-Rule" id="MF_00017"/>
    </source>
</evidence>